<protein>
    <recommendedName>
        <fullName evidence="1">tRNA uridine(34) hydroxylase</fullName>
        <ecNumber evidence="1">1.14.-.-</ecNumber>
    </recommendedName>
    <alternativeName>
        <fullName evidence="1">tRNA hydroxylation protein O</fullName>
    </alternativeName>
</protein>
<proteinExistence type="inferred from homology"/>
<organism>
    <name type="scientific">Salmonella newport (strain SL254)</name>
    <dbReference type="NCBI Taxonomy" id="423368"/>
    <lineage>
        <taxon>Bacteria</taxon>
        <taxon>Pseudomonadati</taxon>
        <taxon>Pseudomonadota</taxon>
        <taxon>Gammaproteobacteria</taxon>
        <taxon>Enterobacterales</taxon>
        <taxon>Enterobacteriaceae</taxon>
        <taxon>Salmonella</taxon>
    </lineage>
</organism>
<comment type="function">
    <text evidence="1">Catalyzes oxygen-dependent 5-hydroxyuridine (ho5U) modification at position 34 in tRNAs.</text>
</comment>
<comment type="catalytic activity">
    <reaction evidence="1">
        <text>uridine(34) in tRNA + AH2 + O2 = 5-hydroxyuridine(34) in tRNA + A + H2O</text>
        <dbReference type="Rhea" id="RHEA:64224"/>
        <dbReference type="Rhea" id="RHEA-COMP:11727"/>
        <dbReference type="Rhea" id="RHEA-COMP:13381"/>
        <dbReference type="ChEBI" id="CHEBI:13193"/>
        <dbReference type="ChEBI" id="CHEBI:15377"/>
        <dbReference type="ChEBI" id="CHEBI:15379"/>
        <dbReference type="ChEBI" id="CHEBI:17499"/>
        <dbReference type="ChEBI" id="CHEBI:65315"/>
        <dbReference type="ChEBI" id="CHEBI:136877"/>
    </reaction>
</comment>
<comment type="similarity">
    <text evidence="1">Belongs to the TrhO family.</text>
</comment>
<name>TRHO_SALNS</name>
<accession>B4T2Y7</accession>
<keyword id="KW-0560">Oxidoreductase</keyword>
<keyword id="KW-0819">tRNA processing</keyword>
<gene>
    <name evidence="1" type="primary">trhO</name>
    <name type="synonym">yceA</name>
    <name type="ordered locus">SNSL254_A1252</name>
</gene>
<reference key="1">
    <citation type="journal article" date="2011" name="J. Bacteriol.">
        <title>Comparative genomics of 28 Salmonella enterica isolates: evidence for CRISPR-mediated adaptive sublineage evolution.</title>
        <authorList>
            <person name="Fricke W.F."/>
            <person name="Mammel M.K."/>
            <person name="McDermott P.F."/>
            <person name="Tartera C."/>
            <person name="White D.G."/>
            <person name="Leclerc J.E."/>
            <person name="Ravel J."/>
            <person name="Cebula T.A."/>
        </authorList>
    </citation>
    <scope>NUCLEOTIDE SEQUENCE [LARGE SCALE GENOMIC DNA]</scope>
    <source>
        <strain>SL254</strain>
    </source>
</reference>
<feature type="chain" id="PRO_1000200376" description="tRNA uridine(34) hydroxylase">
    <location>
        <begin position="1"/>
        <end position="350"/>
    </location>
</feature>
<feature type="domain" description="Rhodanese" evidence="1">
    <location>
        <begin position="146"/>
        <end position="240"/>
    </location>
</feature>
<feature type="region of interest" description="Disordered" evidence="2">
    <location>
        <begin position="319"/>
        <end position="350"/>
    </location>
</feature>
<feature type="compositionally biased region" description="Basic and acidic residues" evidence="2">
    <location>
        <begin position="319"/>
        <end position="328"/>
    </location>
</feature>
<feature type="active site" description="Cysteine persulfide intermediate" evidence="1">
    <location>
        <position position="200"/>
    </location>
</feature>
<sequence length="350" mass="39933">MPVLHNRISNDELKAKMLAESEPRTTISFYKYFTIASPQQTRDALYQVFTALDVFGRVYLAYEGINAQISVPQSKVETFRQQLYTFDPALDGLRLNIALEDDGKSFWVLRMKVRDRIVADGIDDPSFDASNVGDYLKAADVNEMLDDPDAVFIDMRNHYEYEVGHFENALEIPADTFREQLPKAVEMLREHADKKIVMYCTGGIRCEKASAWMKHNGFNKVWHIEGGIIEYARRARAQGLPVRFIGKNFVFDERMGERISDEVIAHCHQCGAPCDSHTNCKNDGCHLLFIQCPQCASKFNGCCSEQCCEELALPEEEQRRRRAGRENGNKIFNKSRGRLNSKLSIPDPAE</sequence>
<dbReference type="EC" id="1.14.-.-" evidence="1"/>
<dbReference type="EMBL" id="CP001113">
    <property type="protein sequence ID" value="ACF64036.1"/>
    <property type="molecule type" value="Genomic_DNA"/>
</dbReference>
<dbReference type="RefSeq" id="WP_001144644.1">
    <property type="nucleotide sequence ID" value="NZ_CCMR01000003.1"/>
</dbReference>
<dbReference type="SMR" id="B4T2Y7"/>
<dbReference type="KEGG" id="see:SNSL254_A1252"/>
<dbReference type="HOGENOM" id="CLU_038878_1_1_6"/>
<dbReference type="Proteomes" id="UP000008824">
    <property type="component" value="Chromosome"/>
</dbReference>
<dbReference type="GO" id="GO:0016705">
    <property type="term" value="F:oxidoreductase activity, acting on paired donors, with incorporation or reduction of molecular oxygen"/>
    <property type="evidence" value="ECO:0007669"/>
    <property type="project" value="UniProtKB-UniRule"/>
</dbReference>
<dbReference type="GO" id="GO:0006400">
    <property type="term" value="P:tRNA modification"/>
    <property type="evidence" value="ECO:0007669"/>
    <property type="project" value="UniProtKB-UniRule"/>
</dbReference>
<dbReference type="CDD" id="cd01518">
    <property type="entry name" value="RHOD_YceA"/>
    <property type="match status" value="1"/>
</dbReference>
<dbReference type="Gene3D" id="3.30.70.100">
    <property type="match status" value="1"/>
</dbReference>
<dbReference type="Gene3D" id="3.40.250.10">
    <property type="entry name" value="Rhodanese-like domain"/>
    <property type="match status" value="1"/>
</dbReference>
<dbReference type="HAMAP" id="MF_00469">
    <property type="entry name" value="TrhO"/>
    <property type="match status" value="1"/>
</dbReference>
<dbReference type="InterPro" id="IPR001763">
    <property type="entry name" value="Rhodanese-like_dom"/>
</dbReference>
<dbReference type="InterPro" id="IPR036873">
    <property type="entry name" value="Rhodanese-like_dom_sf"/>
</dbReference>
<dbReference type="InterPro" id="IPR022111">
    <property type="entry name" value="Rhodanese_C"/>
</dbReference>
<dbReference type="InterPro" id="IPR020936">
    <property type="entry name" value="TrhO"/>
</dbReference>
<dbReference type="InterPro" id="IPR040503">
    <property type="entry name" value="TRHO_N"/>
</dbReference>
<dbReference type="NCBIfam" id="NF001133">
    <property type="entry name" value="PRK00142.1-1"/>
    <property type="match status" value="1"/>
</dbReference>
<dbReference type="PANTHER" id="PTHR43846:SF1">
    <property type="entry name" value="TRNA URIDINE(34) HYDROXYLASE"/>
    <property type="match status" value="1"/>
</dbReference>
<dbReference type="PANTHER" id="PTHR43846">
    <property type="entry name" value="UPF0176 PROTEIN YCEA"/>
    <property type="match status" value="1"/>
</dbReference>
<dbReference type="Pfam" id="PF00581">
    <property type="entry name" value="Rhodanese"/>
    <property type="match status" value="1"/>
</dbReference>
<dbReference type="Pfam" id="PF12368">
    <property type="entry name" value="Rhodanese_C"/>
    <property type="match status" value="1"/>
</dbReference>
<dbReference type="Pfam" id="PF17773">
    <property type="entry name" value="UPF0176_N"/>
    <property type="match status" value="1"/>
</dbReference>
<dbReference type="SMART" id="SM00450">
    <property type="entry name" value="RHOD"/>
    <property type="match status" value="1"/>
</dbReference>
<dbReference type="SUPFAM" id="SSF52821">
    <property type="entry name" value="Rhodanese/Cell cycle control phosphatase"/>
    <property type="match status" value="1"/>
</dbReference>
<dbReference type="PROSITE" id="PS50206">
    <property type="entry name" value="RHODANESE_3"/>
    <property type="match status" value="1"/>
</dbReference>
<evidence type="ECO:0000255" key="1">
    <source>
        <dbReference type="HAMAP-Rule" id="MF_00469"/>
    </source>
</evidence>
<evidence type="ECO:0000256" key="2">
    <source>
        <dbReference type="SAM" id="MobiDB-lite"/>
    </source>
</evidence>